<keyword id="KW-0067">ATP-binding</keyword>
<keyword id="KW-0143">Chaperone</keyword>
<keyword id="KW-0963">Cytoplasm</keyword>
<keyword id="KW-0206">Cytoskeleton</keyword>
<keyword id="KW-0496">Mitochondrion</keyword>
<keyword id="KW-0547">Nucleotide-binding</keyword>
<keyword id="KW-0539">Nucleus</keyword>
<keyword id="KW-1185">Reference proteome</keyword>
<keyword id="KW-0346">Stress response</keyword>
<keyword id="KW-0809">Transit peptide</keyword>
<comment type="function">
    <text evidence="4 5">Chaperone that expresses an ATPase activity.</text>
</comment>
<comment type="subcellular location">
    <subcellularLocation>
        <location>Cytoplasm</location>
        <location>Cell cortex</location>
    </subcellularLocation>
    <subcellularLocation>
        <location>Cytoplasm</location>
        <location>Cytoskeleton</location>
    </subcellularLocation>
    <subcellularLocation>
        <location>Mitochondrion</location>
    </subcellularLocation>
    <subcellularLocation>
        <location>Spore</location>
        <location>Perispore</location>
    </subcellularLocation>
    <subcellularLocation>
        <location>Nucleus</location>
        <location>Nucleolus</location>
    </subcellularLocation>
    <text>Localizes to the cortical actin cytoskeleton. Translocates to the mitochondrion during the prestarvation response and in response to differentiation. In prespore cells, colocalizes with grp94 in the prespore-specific vacuole. Found in the outermost layer of spore cell wall.</text>
</comment>
<comment type="disruption phenotype">
    <text evidence="2">Defects in prestarvation response, sporulation and in resistance to heat shock. When overexpressed, induces precocious aggregation, however, development arrests before the tight mound stage.</text>
</comment>
<comment type="similarity">
    <text evidence="3">Belongs to the heat shock protein 90 family.</text>
</comment>
<dbReference type="EMBL" id="AB061695">
    <property type="protein sequence ID" value="BAC07474.1"/>
    <property type="molecule type" value="mRNA"/>
</dbReference>
<dbReference type="EMBL" id="AAFI02000019">
    <property type="protein sequence ID" value="EAL68975.1"/>
    <property type="molecule type" value="Genomic_DNA"/>
</dbReference>
<dbReference type="RefSeq" id="XP_642968.1">
    <property type="nucleotide sequence ID" value="XM_637876.1"/>
</dbReference>
<dbReference type="SMR" id="Q86L04"/>
<dbReference type="FunCoup" id="Q86L04">
    <property type="interactions" value="224"/>
</dbReference>
<dbReference type="STRING" id="44689.Q86L04"/>
<dbReference type="PaxDb" id="44689-DDB0185036"/>
<dbReference type="EnsemblProtists" id="EAL68975">
    <property type="protein sequence ID" value="EAL68975"/>
    <property type="gene ID" value="DDB_G0276947"/>
</dbReference>
<dbReference type="GeneID" id="8620840"/>
<dbReference type="KEGG" id="ddi:DDB_G0276947"/>
<dbReference type="dictyBase" id="DDB_G0276947">
    <property type="gene designation" value="trap1"/>
</dbReference>
<dbReference type="VEuPathDB" id="AmoebaDB:DDB_G0276947"/>
<dbReference type="eggNOG" id="KOG0019">
    <property type="taxonomic scope" value="Eukaryota"/>
</dbReference>
<dbReference type="HOGENOM" id="CLU_006684_3_1_1"/>
<dbReference type="InParanoid" id="Q86L04"/>
<dbReference type="OMA" id="DHTQQNE"/>
<dbReference type="PhylomeDB" id="Q86L04"/>
<dbReference type="Reactome" id="R-DDI-71403">
    <property type="pathway name" value="Citric acid cycle (TCA cycle)"/>
</dbReference>
<dbReference type="PRO" id="PR:Q86L04"/>
<dbReference type="Proteomes" id="UP000002195">
    <property type="component" value="Chromosome 2"/>
</dbReference>
<dbReference type="GO" id="GO:0005938">
    <property type="term" value="C:cell cortex"/>
    <property type="evidence" value="ECO:0007669"/>
    <property type="project" value="UniProtKB-SubCell"/>
</dbReference>
<dbReference type="GO" id="GO:0005856">
    <property type="term" value="C:cytoskeleton"/>
    <property type="evidence" value="ECO:0007669"/>
    <property type="project" value="UniProtKB-SubCell"/>
</dbReference>
<dbReference type="GO" id="GO:0005743">
    <property type="term" value="C:mitochondrial inner membrane"/>
    <property type="evidence" value="ECO:0000318"/>
    <property type="project" value="GO_Central"/>
</dbReference>
<dbReference type="GO" id="GO:0005730">
    <property type="term" value="C:nucleolus"/>
    <property type="evidence" value="ECO:0000314"/>
    <property type="project" value="dictyBase"/>
</dbReference>
<dbReference type="GO" id="GO:0031160">
    <property type="term" value="C:spore wall"/>
    <property type="evidence" value="ECO:0000303"/>
    <property type="project" value="dictyBase"/>
</dbReference>
<dbReference type="GO" id="GO:0005524">
    <property type="term" value="F:ATP binding"/>
    <property type="evidence" value="ECO:0000318"/>
    <property type="project" value="GO_Central"/>
</dbReference>
<dbReference type="GO" id="GO:0016887">
    <property type="term" value="F:ATP hydrolysis activity"/>
    <property type="evidence" value="ECO:0000318"/>
    <property type="project" value="GO_Central"/>
</dbReference>
<dbReference type="GO" id="GO:0140662">
    <property type="term" value="F:ATP-dependent protein folding chaperone"/>
    <property type="evidence" value="ECO:0007669"/>
    <property type="project" value="InterPro"/>
</dbReference>
<dbReference type="GO" id="GO:0019901">
    <property type="term" value="F:protein kinase binding"/>
    <property type="evidence" value="ECO:0000318"/>
    <property type="project" value="GO_Central"/>
</dbReference>
<dbReference type="GO" id="GO:0051082">
    <property type="term" value="F:unfolded protein binding"/>
    <property type="evidence" value="ECO:0000318"/>
    <property type="project" value="GO_Central"/>
</dbReference>
<dbReference type="GO" id="GO:0030154">
    <property type="term" value="P:cell differentiation"/>
    <property type="evidence" value="ECO:0000315"/>
    <property type="project" value="dictyBase"/>
</dbReference>
<dbReference type="GO" id="GO:0010628">
    <property type="term" value="P:positive regulation of gene expression"/>
    <property type="evidence" value="ECO:0000315"/>
    <property type="project" value="dictyBase"/>
</dbReference>
<dbReference type="GO" id="GO:0006457">
    <property type="term" value="P:protein folding"/>
    <property type="evidence" value="ECO:0000318"/>
    <property type="project" value="GO_Central"/>
</dbReference>
<dbReference type="GO" id="GO:0030435">
    <property type="term" value="P:sporulation resulting in formation of a cellular spore"/>
    <property type="evidence" value="ECO:0000315"/>
    <property type="project" value="dictyBase"/>
</dbReference>
<dbReference type="CDD" id="cd16927">
    <property type="entry name" value="HATPase_Hsp90-like"/>
    <property type="match status" value="1"/>
</dbReference>
<dbReference type="FunFam" id="1.20.120.790:FF:000004">
    <property type="entry name" value="Heat shock protein 75 kDa"/>
    <property type="match status" value="1"/>
</dbReference>
<dbReference type="FunFam" id="3.30.230.80:FF:000004">
    <property type="entry name" value="Heat shock protein 75 kDa"/>
    <property type="match status" value="1"/>
</dbReference>
<dbReference type="FunFam" id="3.40.50.11260:FF:000004">
    <property type="entry name" value="Heat shock protein 75 mitochondrial"/>
    <property type="match status" value="1"/>
</dbReference>
<dbReference type="FunFam" id="3.30.565.10:FF:000009">
    <property type="entry name" value="Molecular chaperone HtpG"/>
    <property type="match status" value="1"/>
</dbReference>
<dbReference type="Gene3D" id="3.30.230.80">
    <property type="match status" value="1"/>
</dbReference>
<dbReference type="Gene3D" id="3.40.50.11260">
    <property type="match status" value="1"/>
</dbReference>
<dbReference type="Gene3D" id="1.20.120.790">
    <property type="entry name" value="Heat shock protein 90, C-terminal domain"/>
    <property type="match status" value="1"/>
</dbReference>
<dbReference type="Gene3D" id="3.30.565.10">
    <property type="entry name" value="Histidine kinase-like ATPase, C-terminal domain"/>
    <property type="match status" value="1"/>
</dbReference>
<dbReference type="HAMAP" id="MF_00505">
    <property type="entry name" value="HSP90"/>
    <property type="match status" value="1"/>
</dbReference>
<dbReference type="InterPro" id="IPR036890">
    <property type="entry name" value="HATPase_C_sf"/>
</dbReference>
<dbReference type="InterPro" id="IPR037196">
    <property type="entry name" value="HSP90_C"/>
</dbReference>
<dbReference type="InterPro" id="IPR001404">
    <property type="entry name" value="Hsp90_fam"/>
</dbReference>
<dbReference type="InterPro" id="IPR020575">
    <property type="entry name" value="Hsp90_N"/>
</dbReference>
<dbReference type="InterPro" id="IPR020568">
    <property type="entry name" value="Ribosomal_Su5_D2-typ_SF"/>
</dbReference>
<dbReference type="NCBIfam" id="NF003555">
    <property type="entry name" value="PRK05218.1"/>
    <property type="match status" value="1"/>
</dbReference>
<dbReference type="PANTHER" id="PTHR11528">
    <property type="entry name" value="HEAT SHOCK PROTEIN 90 FAMILY MEMBER"/>
    <property type="match status" value="1"/>
</dbReference>
<dbReference type="Pfam" id="PF13589">
    <property type="entry name" value="HATPase_c_3"/>
    <property type="match status" value="1"/>
</dbReference>
<dbReference type="Pfam" id="PF00183">
    <property type="entry name" value="HSP90"/>
    <property type="match status" value="1"/>
</dbReference>
<dbReference type="PIRSF" id="PIRSF002583">
    <property type="entry name" value="Hsp90"/>
    <property type="match status" value="1"/>
</dbReference>
<dbReference type="PRINTS" id="PR00775">
    <property type="entry name" value="HEATSHOCK90"/>
</dbReference>
<dbReference type="SUPFAM" id="SSF55874">
    <property type="entry name" value="ATPase domain of HSP90 chaperone/DNA topoisomerase II/histidine kinase"/>
    <property type="match status" value="1"/>
</dbReference>
<dbReference type="SUPFAM" id="SSF110942">
    <property type="entry name" value="HSP90 C-terminal domain"/>
    <property type="match status" value="1"/>
</dbReference>
<dbReference type="SUPFAM" id="SSF54211">
    <property type="entry name" value="Ribosomal protein S5 domain 2-like"/>
    <property type="match status" value="1"/>
</dbReference>
<proteinExistence type="evidence at transcript level"/>
<accession>Q86L04</accession>
<accession>Q550G4</accession>
<accession>Q8MYB0</accession>
<evidence type="ECO:0000250" key="1"/>
<evidence type="ECO:0000269" key="2">
    <source>
    </source>
</evidence>
<evidence type="ECO:0000305" key="3"/>
<evidence type="ECO:0000305" key="4">
    <source>
    </source>
</evidence>
<evidence type="ECO:0000305" key="5">
    <source>
    </source>
</evidence>
<reference key="1">
    <citation type="submission" date="2001-05" db="EMBL/GenBank/DDBJ databases">
        <title>Novel functions of a Dictyostelium TRAP1 homologue.</title>
        <authorList>
            <person name="Morita T."/>
            <person name="Saitoh K."/>
            <person name="Amagai A."/>
            <person name="Maeda Y."/>
        </authorList>
    </citation>
    <scope>NUCLEOTIDE SEQUENCE [MRNA]</scope>
</reference>
<reference key="2">
    <citation type="journal article" date="2002" name="Nature">
        <title>Sequence and analysis of chromosome 2 of Dictyostelium discoideum.</title>
        <authorList>
            <person name="Gloeckner G."/>
            <person name="Eichinger L."/>
            <person name="Szafranski K."/>
            <person name="Pachebat J.A."/>
            <person name="Bankier A.T."/>
            <person name="Dear P.H."/>
            <person name="Lehmann R."/>
            <person name="Baumgart C."/>
            <person name="Parra G."/>
            <person name="Abril J.F."/>
            <person name="Guigo R."/>
            <person name="Kumpf K."/>
            <person name="Tunggal B."/>
            <person name="Cox E.C."/>
            <person name="Quail M.A."/>
            <person name="Platzer M."/>
            <person name="Rosenthal A."/>
            <person name="Noegel A.A."/>
        </authorList>
    </citation>
    <scope>NUCLEOTIDE SEQUENCE [LARGE SCALE GENOMIC DNA]</scope>
    <source>
        <strain>AX4</strain>
    </source>
</reference>
<reference key="3">
    <citation type="journal article" date="2005" name="Nature">
        <title>The genome of the social amoeba Dictyostelium discoideum.</title>
        <authorList>
            <person name="Eichinger L."/>
            <person name="Pachebat J.A."/>
            <person name="Gloeckner G."/>
            <person name="Rajandream M.A."/>
            <person name="Sucgang R."/>
            <person name="Berriman M."/>
            <person name="Song J."/>
            <person name="Olsen R."/>
            <person name="Szafranski K."/>
            <person name="Xu Q."/>
            <person name="Tunggal B."/>
            <person name="Kummerfeld S."/>
            <person name="Madera M."/>
            <person name="Konfortov B.A."/>
            <person name="Rivero F."/>
            <person name="Bankier A.T."/>
            <person name="Lehmann R."/>
            <person name="Hamlin N."/>
            <person name="Davies R."/>
            <person name="Gaudet P."/>
            <person name="Fey P."/>
            <person name="Pilcher K."/>
            <person name="Chen G."/>
            <person name="Saunders D."/>
            <person name="Sodergren E.J."/>
            <person name="Davis P."/>
            <person name="Kerhornou A."/>
            <person name="Nie X."/>
            <person name="Hall N."/>
            <person name="Anjard C."/>
            <person name="Hemphill L."/>
            <person name="Bason N."/>
            <person name="Farbrother P."/>
            <person name="Desany B."/>
            <person name="Just E."/>
            <person name="Morio T."/>
            <person name="Rost R."/>
            <person name="Churcher C.M."/>
            <person name="Cooper J."/>
            <person name="Haydock S."/>
            <person name="van Driessche N."/>
            <person name="Cronin A."/>
            <person name="Goodhead I."/>
            <person name="Muzny D.M."/>
            <person name="Mourier T."/>
            <person name="Pain A."/>
            <person name="Lu M."/>
            <person name="Harper D."/>
            <person name="Lindsay R."/>
            <person name="Hauser H."/>
            <person name="James K.D."/>
            <person name="Quiles M."/>
            <person name="Madan Babu M."/>
            <person name="Saito T."/>
            <person name="Buchrieser C."/>
            <person name="Wardroper A."/>
            <person name="Felder M."/>
            <person name="Thangavelu M."/>
            <person name="Johnson D."/>
            <person name="Knights A."/>
            <person name="Loulseged H."/>
            <person name="Mungall K.L."/>
            <person name="Oliver K."/>
            <person name="Price C."/>
            <person name="Quail M.A."/>
            <person name="Urushihara H."/>
            <person name="Hernandez J."/>
            <person name="Rabbinowitsch E."/>
            <person name="Steffen D."/>
            <person name="Sanders M."/>
            <person name="Ma J."/>
            <person name="Kohara Y."/>
            <person name="Sharp S."/>
            <person name="Simmonds M.N."/>
            <person name="Spiegler S."/>
            <person name="Tivey A."/>
            <person name="Sugano S."/>
            <person name="White B."/>
            <person name="Walker D."/>
            <person name="Woodward J.R."/>
            <person name="Winckler T."/>
            <person name="Tanaka Y."/>
            <person name="Shaulsky G."/>
            <person name="Schleicher M."/>
            <person name="Weinstock G.M."/>
            <person name="Rosenthal A."/>
            <person name="Cox E.C."/>
            <person name="Chisholm R.L."/>
            <person name="Gibbs R.A."/>
            <person name="Loomis W.F."/>
            <person name="Platzer M."/>
            <person name="Kay R.R."/>
            <person name="Williams J.G."/>
            <person name="Dear P.H."/>
            <person name="Noegel A.A."/>
            <person name="Barrell B.G."/>
            <person name="Kuspa A."/>
        </authorList>
    </citation>
    <scope>NUCLEOTIDE SEQUENCE [LARGE SCALE GENOMIC DNA]</scope>
    <source>
        <strain>AX4</strain>
    </source>
</reference>
<reference key="4">
    <citation type="journal article" date="2002" name="Exp. Cell Res.">
        <title>Unique behavior of a dictyostelium homologue of TRAP-1, coupling with differentiation of D. discoideum cells.</title>
        <authorList>
            <person name="Morita T."/>
            <person name="Amagai A."/>
            <person name="Maeda Y."/>
        </authorList>
    </citation>
    <scope>FUNCTION</scope>
    <scope>SUBCELLULAR LOCATION</scope>
</reference>
<reference key="5">
    <citation type="journal article" date="2004" name="J. Cell Sci.">
        <title>Translocation of the Dictyostelium TRAP1 homologue to mitochondria induces a novel prestarvation response.</title>
        <authorList>
            <person name="Morita T."/>
            <person name="Amagai A."/>
            <person name="Maeda Y."/>
        </authorList>
    </citation>
    <scope>SUBCELLULAR LOCATION</scope>
</reference>
<reference key="6">
    <citation type="journal article" date="2005" name="Exp. Cell Res.">
        <title>Involvement of the TRAP-1 homologue, Dd-TRAP1, in spore differentiation during Dictyostelium development.</title>
        <authorList>
            <person name="Morita T."/>
            <person name="Yamaguchi H."/>
            <person name="Amagai A."/>
            <person name="Maeda Y."/>
        </authorList>
    </citation>
    <scope>FUNCTION</scope>
    <scope>DISRUPTION PHENOTYPE</scope>
</reference>
<reference key="7">
    <citation type="journal article" date="2005" name="Exp. Cell Res.">
        <title>Changes in spatial and temporal localization of Dictyostelium homologues of TRAP1 and GRP94 revealed by immunoelectron microscopy.</title>
        <authorList>
            <person name="Yamaguchi H."/>
            <person name="Morita T."/>
            <person name="Amagai A."/>
            <person name="Maeda Y."/>
        </authorList>
    </citation>
    <scope>SUBCELLULAR LOCATION</scope>
</reference>
<gene>
    <name type="primary">trap1</name>
    <name type="ORF">DDB_G0276947</name>
</gene>
<feature type="transit peptide" description="Mitochondrion">
    <location>
        <begin position="1"/>
        <end position="62"/>
    </location>
</feature>
<feature type="chain" id="PRO_0000327691" description="TNF receptor-associated protein 1 homolog, mitochondrial">
    <location>
        <begin position="63"/>
        <end position="711"/>
    </location>
</feature>
<feature type="region of interest" description="Dimerization">
    <location>
        <begin position="303"/>
        <end position="711"/>
    </location>
</feature>
<feature type="binding site" evidence="1">
    <location>
        <position position="132"/>
    </location>
    <ligand>
        <name>ATP</name>
        <dbReference type="ChEBI" id="CHEBI:30616"/>
    </ligand>
</feature>
<feature type="binding site" evidence="1">
    <location>
        <position position="175"/>
    </location>
    <ligand>
        <name>ATP</name>
        <dbReference type="ChEBI" id="CHEBI:30616"/>
    </ligand>
</feature>
<feature type="binding site" evidence="1">
    <location>
        <position position="188"/>
    </location>
    <ligand>
        <name>ATP</name>
        <dbReference type="ChEBI" id="CHEBI:30616"/>
    </ligand>
</feature>
<feature type="binding site" evidence="1">
    <location>
        <position position="221"/>
    </location>
    <ligand>
        <name>ATP</name>
        <dbReference type="ChEBI" id="CHEBI:30616"/>
    </ligand>
</feature>
<feature type="binding site" evidence="1">
    <location>
        <position position="417"/>
    </location>
    <ligand>
        <name>ATP</name>
        <dbReference type="ChEBI" id="CHEBI:30616"/>
    </ligand>
</feature>
<feature type="sequence conflict" description="In Ref. 1; BAC07474." evidence="3" ref="1">
    <original>E</original>
    <variation>V</variation>
    <location>
        <position position="184"/>
    </location>
</feature>
<organism>
    <name type="scientific">Dictyostelium discoideum</name>
    <name type="common">Social amoeba</name>
    <dbReference type="NCBI Taxonomy" id="44689"/>
    <lineage>
        <taxon>Eukaryota</taxon>
        <taxon>Amoebozoa</taxon>
        <taxon>Evosea</taxon>
        <taxon>Eumycetozoa</taxon>
        <taxon>Dictyostelia</taxon>
        <taxon>Dictyosteliales</taxon>
        <taxon>Dictyosteliaceae</taxon>
        <taxon>Dictyostelium</taxon>
    </lineage>
</organism>
<sequence>MQRTLSKVILNSGKNNLLKSSNLLNSNLLKATTTNIIGIKTINNNNNVNSIIGFKSLNKRYFTSNTPKVEEEDDEIAPDEAIKAEEKIKETERVIGLSEKLSFQTETQKILHIVAESLYTEKEVFIRELISNASDAIEKVRHTQLTNASMIEDASIPFEIKISTDEDNKTLIIQDSGIGMTKDEMIKNLGKIGYSGSSDFIKKLGENPDKASIIGQFGVGFYSCFMVGHTIKIYTKSATPGSKGYLWESDGTGSYSITEAEGVSRGTKIIIHLKPSSYEYSKKSIVENIIKKYSNFVGFPIALNGTTVNTIKPLWTLNKNAISEEEHKEFYQFLSKSYDTPSYRVHFSTDTPLSIRSIFYIPSQHMEKYGMGKMEPGVSLFSRKVLIQQKANGILPEWMRFVRGVVDSEDIPLNVSREHLQDNGLIQRISSVLVKRILKHLNDEAKSDPEKFNVFMTEFGGFFKEGIITDFKWKDEISKLLRFESSNGSTASKTDAVSLEQYVSRMKPEQKNIYFLSVPNRAVGLSSPYYEPFQLKDIEVIFLYNAVDEFVLTNVGHFGDKKIVSVESKEAEEFLATNQDKKTETLSQDEIDKFLSWVSTVASDKVTQAKSTTRSISSPAIIIDHESANFRRMLKMVEPGKQHETPKQVVEFNMNHPIILKLVQQTESNPTIAKLVIDQVVDNAFVSAGLIEDNREMIPRINQLLDSLLTK</sequence>
<name>TRAP1_DICDI</name>
<protein>
    <recommendedName>
        <fullName>TNF receptor-associated protein 1 homolog, mitochondrial</fullName>
        <shortName>TNFR-associated protein 1 homolog</shortName>
        <shortName>Trap1 homolog</shortName>
    </recommendedName>
</protein>